<sequence>MRAFIVGRWQPFHKGHLEIIKKISEEVDEIIIGIGSCQRSHTLTDPFTAGERIMMITKALGRYNINYYIIPINDIDFNAVWVSCVESLTPPFDTVYTGNSLVRELFSEKNYVVKKPELYNRKEYSGTEIRKKMLKGEKWEHFVPEEVVDVILEIDGIGRIKRLDEKDYDDYF</sequence>
<name>NADM_METVS</name>
<gene>
    <name type="ordered locus">Mevan_0890</name>
</gene>
<protein>
    <recommendedName>
        <fullName evidence="1">Nicotinamide-nucleotide adenylyltransferase</fullName>
        <ecNumber evidence="1">2.7.7.1</ecNumber>
    </recommendedName>
    <alternativeName>
        <fullName evidence="1">NAD(+) diphosphorylase</fullName>
    </alternativeName>
    <alternativeName>
        <fullName evidence="1">NAD(+) pyrophosphorylase</fullName>
    </alternativeName>
    <alternativeName>
        <fullName evidence="1">NMN adenylyltransferase</fullName>
    </alternativeName>
</protein>
<organism>
    <name type="scientific">Methanococcus vannielii (strain ATCC 35089 / DSM 1224 / JCM 13029 / OCM 148 / SB)</name>
    <dbReference type="NCBI Taxonomy" id="406327"/>
    <lineage>
        <taxon>Archaea</taxon>
        <taxon>Methanobacteriati</taxon>
        <taxon>Methanobacteriota</taxon>
        <taxon>Methanomada group</taxon>
        <taxon>Methanococci</taxon>
        <taxon>Methanococcales</taxon>
        <taxon>Methanococcaceae</taxon>
        <taxon>Methanococcus</taxon>
    </lineage>
</organism>
<dbReference type="EC" id="2.7.7.1" evidence="1"/>
<dbReference type="EMBL" id="CP000742">
    <property type="protein sequence ID" value="ABR54795.1"/>
    <property type="molecule type" value="Genomic_DNA"/>
</dbReference>
<dbReference type="RefSeq" id="WP_011972696.1">
    <property type="nucleotide sequence ID" value="NC_009634.1"/>
</dbReference>
<dbReference type="SMR" id="A6UQM3"/>
<dbReference type="STRING" id="406327.Mevan_0890"/>
<dbReference type="GeneID" id="5326007"/>
<dbReference type="KEGG" id="mvn:Mevan_0890"/>
<dbReference type="eggNOG" id="arCOG00972">
    <property type="taxonomic scope" value="Archaea"/>
</dbReference>
<dbReference type="HOGENOM" id="CLU_108783_0_0_2"/>
<dbReference type="OrthoDB" id="264480at2157"/>
<dbReference type="UniPathway" id="UPA00253">
    <property type="reaction ID" value="UER00600"/>
</dbReference>
<dbReference type="Proteomes" id="UP000001107">
    <property type="component" value="Chromosome"/>
</dbReference>
<dbReference type="GO" id="GO:0005737">
    <property type="term" value="C:cytoplasm"/>
    <property type="evidence" value="ECO:0007669"/>
    <property type="project" value="UniProtKB-SubCell"/>
</dbReference>
<dbReference type="GO" id="GO:0005524">
    <property type="term" value="F:ATP binding"/>
    <property type="evidence" value="ECO:0007669"/>
    <property type="project" value="UniProtKB-KW"/>
</dbReference>
<dbReference type="GO" id="GO:0000309">
    <property type="term" value="F:nicotinamide-nucleotide adenylyltransferase activity"/>
    <property type="evidence" value="ECO:0007669"/>
    <property type="project" value="UniProtKB-UniRule"/>
</dbReference>
<dbReference type="GO" id="GO:0009435">
    <property type="term" value="P:NAD biosynthetic process"/>
    <property type="evidence" value="ECO:0007669"/>
    <property type="project" value="UniProtKB-UniRule"/>
</dbReference>
<dbReference type="Gene3D" id="3.40.50.620">
    <property type="entry name" value="HUPs"/>
    <property type="match status" value="1"/>
</dbReference>
<dbReference type="HAMAP" id="MF_00243">
    <property type="entry name" value="NMN_adenylyltr"/>
    <property type="match status" value="1"/>
</dbReference>
<dbReference type="InterPro" id="IPR004821">
    <property type="entry name" value="Cyt_trans-like"/>
</dbReference>
<dbReference type="InterPro" id="IPR006418">
    <property type="entry name" value="NMN_Atrans_arc"/>
</dbReference>
<dbReference type="InterPro" id="IPR014729">
    <property type="entry name" value="Rossmann-like_a/b/a_fold"/>
</dbReference>
<dbReference type="NCBIfam" id="TIGR01527">
    <property type="entry name" value="arch_NMN_Atrans"/>
    <property type="match status" value="1"/>
</dbReference>
<dbReference type="NCBIfam" id="TIGR00125">
    <property type="entry name" value="cyt_tran_rel"/>
    <property type="match status" value="1"/>
</dbReference>
<dbReference type="NCBIfam" id="NF002243">
    <property type="entry name" value="PRK01153.1"/>
    <property type="match status" value="1"/>
</dbReference>
<dbReference type="PANTHER" id="PTHR21342:SF0">
    <property type="entry name" value="BIFUNCTIONAL NMN ADENYLYLTRANSFERASE_NUDIX HYDROLASE"/>
    <property type="match status" value="1"/>
</dbReference>
<dbReference type="PANTHER" id="PTHR21342">
    <property type="entry name" value="PHOSPHOPANTETHEINE ADENYLYLTRANSFERASE"/>
    <property type="match status" value="1"/>
</dbReference>
<dbReference type="Pfam" id="PF01467">
    <property type="entry name" value="CTP_transf_like"/>
    <property type="match status" value="1"/>
</dbReference>
<dbReference type="SUPFAM" id="SSF52374">
    <property type="entry name" value="Nucleotidylyl transferase"/>
    <property type="match status" value="1"/>
</dbReference>
<accession>A6UQM3</accession>
<proteinExistence type="inferred from homology"/>
<reference key="1">
    <citation type="submission" date="2007-06" db="EMBL/GenBank/DDBJ databases">
        <title>Complete sequence of Methanococcus vannielii SB.</title>
        <authorList>
            <consortium name="US DOE Joint Genome Institute"/>
            <person name="Copeland A."/>
            <person name="Lucas S."/>
            <person name="Lapidus A."/>
            <person name="Barry K."/>
            <person name="Glavina del Rio T."/>
            <person name="Dalin E."/>
            <person name="Tice H."/>
            <person name="Pitluck S."/>
            <person name="Chain P."/>
            <person name="Malfatti S."/>
            <person name="Shin M."/>
            <person name="Vergez L."/>
            <person name="Schmutz J."/>
            <person name="Larimer F."/>
            <person name="Land M."/>
            <person name="Hauser L."/>
            <person name="Kyrpides N."/>
            <person name="Anderson I."/>
            <person name="Sieprawska-Lupa M."/>
            <person name="Whitman W.B."/>
            <person name="Richardson P."/>
        </authorList>
    </citation>
    <scope>NUCLEOTIDE SEQUENCE [LARGE SCALE GENOMIC DNA]</scope>
    <source>
        <strain>ATCC 35089 / DSM 1224 / JCM 13029 / OCM 148 / SB</strain>
    </source>
</reference>
<comment type="catalytic activity">
    <reaction evidence="1">
        <text>beta-nicotinamide D-ribonucleotide + ATP + H(+) = diphosphate + NAD(+)</text>
        <dbReference type="Rhea" id="RHEA:21360"/>
        <dbReference type="ChEBI" id="CHEBI:14649"/>
        <dbReference type="ChEBI" id="CHEBI:15378"/>
        <dbReference type="ChEBI" id="CHEBI:30616"/>
        <dbReference type="ChEBI" id="CHEBI:33019"/>
        <dbReference type="ChEBI" id="CHEBI:57540"/>
        <dbReference type="EC" id="2.7.7.1"/>
    </reaction>
</comment>
<comment type="pathway">
    <text evidence="1">Cofactor biosynthesis; NAD(+) biosynthesis; NAD(+) from nicotinamide D-ribonucleotide: step 1/1.</text>
</comment>
<comment type="subcellular location">
    <subcellularLocation>
        <location evidence="1">Cytoplasm</location>
    </subcellularLocation>
</comment>
<comment type="similarity">
    <text evidence="1">Belongs to the archaeal NMN adenylyltransferase family.</text>
</comment>
<feature type="chain" id="PRO_1000005741" description="Nicotinamide-nucleotide adenylyltransferase">
    <location>
        <begin position="1"/>
        <end position="172"/>
    </location>
</feature>
<evidence type="ECO:0000255" key="1">
    <source>
        <dbReference type="HAMAP-Rule" id="MF_00243"/>
    </source>
</evidence>
<keyword id="KW-0067">ATP-binding</keyword>
<keyword id="KW-0963">Cytoplasm</keyword>
<keyword id="KW-0520">NAD</keyword>
<keyword id="KW-0547">Nucleotide-binding</keyword>
<keyword id="KW-0548">Nucleotidyltransferase</keyword>
<keyword id="KW-0662">Pyridine nucleotide biosynthesis</keyword>
<keyword id="KW-0808">Transferase</keyword>